<reference key="1">
    <citation type="submission" date="2004-12" db="EMBL/GenBank/DDBJ databases">
        <title>A superfamily of membrane-associated DHHC type zinc finger proteins.</title>
        <authorList>
            <person name="Chen Y."/>
            <person name="Huang C.-H."/>
        </authorList>
    </citation>
    <scope>NUCLEOTIDE SEQUENCE [MRNA]</scope>
</reference>
<protein>
    <recommendedName>
        <fullName evidence="7">Palmitoyltransferase ZDHHC8</fullName>
        <ecNumber evidence="3">2.3.1.225</ecNumber>
    </recommendedName>
    <alternativeName>
        <fullName evidence="3">Zinc finger DHHC domain-containing protein 8</fullName>
        <shortName evidence="3">DHHC-8</shortName>
    </alternativeName>
</protein>
<accession>Q2THX0</accession>
<proteinExistence type="evidence at transcript level"/>
<name>ZDHC8_PANTR</name>
<feature type="chain" id="PRO_0000232438" description="Palmitoyltransferase ZDHHC8">
    <location>
        <begin position="1"/>
        <end position="765"/>
    </location>
</feature>
<feature type="topological domain" description="Cytoplasmic" evidence="4">
    <location>
        <begin position="1"/>
        <end position="13"/>
    </location>
</feature>
<feature type="transmembrane region" description="Helical" evidence="4">
    <location>
        <begin position="14"/>
        <end position="34"/>
    </location>
</feature>
<feature type="topological domain" description="Lumenal" evidence="4">
    <location>
        <begin position="35"/>
        <end position="52"/>
    </location>
</feature>
<feature type="transmembrane region" description="Helical" evidence="4">
    <location>
        <begin position="53"/>
        <end position="73"/>
    </location>
</feature>
<feature type="topological domain" description="Cytoplasmic" evidence="4">
    <location>
        <begin position="74"/>
        <end position="148"/>
    </location>
</feature>
<feature type="transmembrane region" description="Helical" evidence="4">
    <location>
        <begin position="149"/>
        <end position="169"/>
    </location>
</feature>
<feature type="topological domain" description="Lumenal" evidence="4">
    <location>
        <begin position="170"/>
        <end position="190"/>
    </location>
</feature>
<feature type="transmembrane region" description="Helical" evidence="4">
    <location>
        <begin position="191"/>
        <end position="211"/>
    </location>
</feature>
<feature type="topological domain" description="Cytoplasmic" evidence="4">
    <location>
        <begin position="212"/>
        <end position="765"/>
    </location>
</feature>
<feature type="domain" description="DHHC" evidence="5">
    <location>
        <begin position="104"/>
        <end position="154"/>
    </location>
</feature>
<feature type="region of interest" description="Disordered" evidence="6">
    <location>
        <begin position="293"/>
        <end position="352"/>
    </location>
</feature>
<feature type="region of interest" description="Disordered" evidence="6">
    <location>
        <begin position="509"/>
        <end position="540"/>
    </location>
</feature>
<feature type="region of interest" description="Disordered" evidence="6">
    <location>
        <begin position="613"/>
        <end position="746"/>
    </location>
</feature>
<feature type="compositionally biased region" description="Basic and acidic residues" evidence="6">
    <location>
        <begin position="301"/>
        <end position="311"/>
    </location>
</feature>
<feature type="compositionally biased region" description="Low complexity" evidence="6">
    <location>
        <begin position="622"/>
        <end position="653"/>
    </location>
</feature>
<feature type="active site" description="S-palmitoyl cysteine intermediate" evidence="5">
    <location>
        <position position="134"/>
    </location>
</feature>
<feature type="modified residue" description="Phosphoserine" evidence="1">
    <location>
        <position position="337"/>
    </location>
</feature>
<feature type="modified residue" description="Omega-N-methylarginine" evidence="1">
    <location>
        <position position="441"/>
    </location>
</feature>
<feature type="modified residue" description="Phosphoserine" evidence="3">
    <location>
        <position position="606"/>
    </location>
</feature>
<feature type="modified residue" description="Phosphoserine" evidence="1">
    <location>
        <position position="627"/>
    </location>
</feature>
<feature type="modified residue" description="Phosphoserine" evidence="3">
    <location>
        <position position="675"/>
    </location>
</feature>
<feature type="modified residue" description="Phosphoserine" evidence="3">
    <location>
        <position position="725"/>
    </location>
</feature>
<feature type="modified residue" description="Phosphoserine" evidence="3">
    <location>
        <position position="743"/>
    </location>
</feature>
<keyword id="KW-0012">Acyltransferase</keyword>
<keyword id="KW-0333">Golgi apparatus</keyword>
<keyword id="KW-0449">Lipoprotein</keyword>
<keyword id="KW-0472">Membrane</keyword>
<keyword id="KW-0488">Methylation</keyword>
<keyword id="KW-0496">Mitochondrion</keyword>
<keyword id="KW-0564">Palmitate</keyword>
<keyword id="KW-0597">Phosphoprotein</keyword>
<keyword id="KW-1185">Reference proteome</keyword>
<keyword id="KW-0808">Transferase</keyword>
<keyword id="KW-0812">Transmembrane</keyword>
<keyword id="KW-1133">Transmembrane helix</keyword>
<gene>
    <name evidence="3" type="primary">ZDHHC8</name>
</gene>
<evidence type="ECO:0000250" key="1">
    <source>
        <dbReference type="UniProtKB" id="Q5Y5T5"/>
    </source>
</evidence>
<evidence type="ECO:0000250" key="2">
    <source>
        <dbReference type="UniProtKB" id="Q8IUH5"/>
    </source>
</evidence>
<evidence type="ECO:0000250" key="3">
    <source>
        <dbReference type="UniProtKB" id="Q9ULC8"/>
    </source>
</evidence>
<evidence type="ECO:0000255" key="4"/>
<evidence type="ECO:0000255" key="5">
    <source>
        <dbReference type="PROSITE-ProRule" id="PRU00067"/>
    </source>
</evidence>
<evidence type="ECO:0000256" key="6">
    <source>
        <dbReference type="SAM" id="MobiDB-lite"/>
    </source>
</evidence>
<evidence type="ECO:0000305" key="7"/>
<sequence>MPRSPGTRLKPAKYIPVATAAALLVGSSTLFFVFTCPWLTRAVSPAVPVYNGIIFLFVLANFSMATFMDPGVFPRADEDEDKEDDFRAPLYKNVDVRGIQVRMKWCATCHFYRPPRCSHCSVCDNCVEDFDHHCPWVNNCIGRRNYRYFFLFLLSLSAHMVGVVAFGLVYVLNHAEGLGAAHTTITMAVMCVAGLFFIPVIGLTGFHVVLVTRGRTTNEQVTGKFRGGVNPFTRGCCGNVEHVLCSPLAPRYVVEPPRLPLAVSLKPPFLRPELLDRAAPLKVKLSDNGLKAGLGRSKSKGSLDRLDEKPLDLGPPLPPKIEAGTFSSDLQTPRPGSAESALSVQRTSPPTPAMYKFRPAFPTGPKVPFCGPGEQVPGPDSLTLGDDSIRSLDFVSEPSLDLPDYGPGGLHAAYPPSPPLSASDAFSGALRSLSLKASSRRGGDHVALQPLRSEGGPPTPHRSIFAPHALPNRNGSLSYDSLLNPGSPGGHACPAHPAVGMAGYHSPYLHPGATGDPPRPLPRSFSPVLGPRPREPSPVRYDNLSRTIMASIQERKDREERERLLRSQADSLFGDSGVYDAPSSYSLQQASVLSEGPRGPALRYGSRDDLVAGPGFGGARNPALQTSLSSLSSSVSRAPRTSSSSLQADQASSNAPGPRPSSGSHRSPARQGLPSPPGTPHLTILRGPQSCRLHPHGPPRATALADRAEDHPQLKTPPSKLNGQSPGLARLGLATGPPGPSASPTRHTLVKKVSGVGGTTYEISV</sequence>
<organism>
    <name type="scientific">Pan troglodytes</name>
    <name type="common">Chimpanzee</name>
    <dbReference type="NCBI Taxonomy" id="9598"/>
    <lineage>
        <taxon>Eukaryota</taxon>
        <taxon>Metazoa</taxon>
        <taxon>Chordata</taxon>
        <taxon>Craniata</taxon>
        <taxon>Vertebrata</taxon>
        <taxon>Euteleostomi</taxon>
        <taxon>Mammalia</taxon>
        <taxon>Eutheria</taxon>
        <taxon>Euarchontoglires</taxon>
        <taxon>Primates</taxon>
        <taxon>Haplorrhini</taxon>
        <taxon>Catarrhini</taxon>
        <taxon>Hominidae</taxon>
        <taxon>Pan</taxon>
    </lineage>
</organism>
<dbReference type="EC" id="2.3.1.225" evidence="3"/>
<dbReference type="EMBL" id="AY871200">
    <property type="protein sequence ID" value="AAX68533.1"/>
    <property type="molecule type" value="mRNA"/>
</dbReference>
<dbReference type="RefSeq" id="NP_001033745.1">
    <property type="nucleotide sequence ID" value="NM_001038656.1"/>
</dbReference>
<dbReference type="SMR" id="Q2THX0"/>
<dbReference type="STRING" id="9598.ENSPTRP00000086070"/>
<dbReference type="PaxDb" id="9598-ENSPTRP00000024252"/>
<dbReference type="GeneID" id="458662"/>
<dbReference type="KEGG" id="ptr:458662"/>
<dbReference type="CTD" id="29801"/>
<dbReference type="eggNOG" id="KOG1311">
    <property type="taxonomic scope" value="Eukaryota"/>
</dbReference>
<dbReference type="InParanoid" id="Q2THX0"/>
<dbReference type="Proteomes" id="UP000002277">
    <property type="component" value="Unplaced"/>
</dbReference>
<dbReference type="GO" id="GO:0005794">
    <property type="term" value="C:Golgi apparatus"/>
    <property type="evidence" value="ECO:0000318"/>
    <property type="project" value="GO_Central"/>
</dbReference>
<dbReference type="GO" id="GO:0000139">
    <property type="term" value="C:Golgi membrane"/>
    <property type="evidence" value="ECO:0007669"/>
    <property type="project" value="UniProtKB-SubCell"/>
</dbReference>
<dbReference type="GO" id="GO:0031966">
    <property type="term" value="C:mitochondrial membrane"/>
    <property type="evidence" value="ECO:0007669"/>
    <property type="project" value="UniProtKB-SubCell"/>
</dbReference>
<dbReference type="GO" id="GO:0016409">
    <property type="term" value="F:palmitoyltransferase activity"/>
    <property type="evidence" value="ECO:0000318"/>
    <property type="project" value="GO_Central"/>
</dbReference>
<dbReference type="GO" id="GO:0019706">
    <property type="term" value="F:protein-cysteine S-palmitoyltransferase activity"/>
    <property type="evidence" value="ECO:0007669"/>
    <property type="project" value="UniProtKB-EC"/>
</dbReference>
<dbReference type="GO" id="GO:0018230">
    <property type="term" value="P:peptidyl-L-cysteine S-palmitoylation"/>
    <property type="evidence" value="ECO:0000250"/>
    <property type="project" value="UniProtKB"/>
</dbReference>
<dbReference type="GO" id="GO:0010875">
    <property type="term" value="P:positive regulation of cholesterol efflux"/>
    <property type="evidence" value="ECO:0000250"/>
    <property type="project" value="UniProtKB"/>
</dbReference>
<dbReference type="InterPro" id="IPR001594">
    <property type="entry name" value="Palmitoyltrfase_DHHC"/>
</dbReference>
<dbReference type="PANTHER" id="PTHR12349">
    <property type="entry name" value="ANKYRIN REPEAT AND LEM DOMAIN-CONTAINING PROTEIN 2"/>
    <property type="match status" value="1"/>
</dbReference>
<dbReference type="PANTHER" id="PTHR12349:SF1">
    <property type="entry name" value="PALMITOYLTRANSFERASE ZDHHC8"/>
    <property type="match status" value="1"/>
</dbReference>
<dbReference type="Pfam" id="PF01529">
    <property type="entry name" value="DHHC"/>
    <property type="match status" value="1"/>
</dbReference>
<dbReference type="PROSITE" id="PS50216">
    <property type="entry name" value="DHHC"/>
    <property type="match status" value="1"/>
</dbReference>
<comment type="function">
    <text evidence="1 3">Palmitoyltransferase that catalyzes the addition of palmitate onto various protein substrates and therefore functions in several unrelated biological processes. Through the palmitoylation of ABCA1 regulates the localization of the transporter to the plasma membrane and thereby regulates its function in cholesterol and phospholipid efflux (By similarity). Could also pamitoylate the D(2) dopamine receptor DRD2 and regulate its stability and localization to the plasma membrane (By similarity). Could also play a role in glutamatergic transmission (By similarity).</text>
</comment>
<comment type="catalytic activity">
    <reaction evidence="3">
        <text>L-cysteinyl-[protein] + hexadecanoyl-CoA = S-hexadecanoyl-L-cysteinyl-[protein] + CoA</text>
        <dbReference type="Rhea" id="RHEA:36683"/>
        <dbReference type="Rhea" id="RHEA-COMP:10131"/>
        <dbReference type="Rhea" id="RHEA-COMP:11032"/>
        <dbReference type="ChEBI" id="CHEBI:29950"/>
        <dbReference type="ChEBI" id="CHEBI:57287"/>
        <dbReference type="ChEBI" id="CHEBI:57379"/>
        <dbReference type="ChEBI" id="CHEBI:74151"/>
        <dbReference type="EC" id="2.3.1.225"/>
    </reaction>
    <physiologicalReaction direction="left-to-right" evidence="3">
        <dbReference type="Rhea" id="RHEA:36684"/>
    </physiologicalReaction>
</comment>
<comment type="subcellular location">
    <subcellularLocation>
        <location evidence="3">Golgi apparatus membrane</location>
        <topology evidence="4">Multi-pass membrane protein</topology>
    </subcellularLocation>
    <subcellularLocation>
        <location evidence="1">Mitochondrion membrane</location>
        <topology evidence="4">Multi-pass membrane protein</topology>
    </subcellularLocation>
</comment>
<comment type="domain">
    <text evidence="2">The DHHC domain is required for palmitoyltransferase activity.</text>
</comment>
<comment type="similarity">
    <text evidence="7">Belongs to the DHHC palmitoyltransferase family. ERF2/ZDHHC9 subfamily.</text>
</comment>